<proteinExistence type="inferred from homology"/>
<organism>
    <name type="scientific">Cereibacter sphaeroides (strain ATCC 17025 / ATH 2.4.3)</name>
    <name type="common">Rhodobacter sphaeroides</name>
    <dbReference type="NCBI Taxonomy" id="349102"/>
    <lineage>
        <taxon>Bacteria</taxon>
        <taxon>Pseudomonadati</taxon>
        <taxon>Pseudomonadota</taxon>
        <taxon>Alphaproteobacteria</taxon>
        <taxon>Rhodobacterales</taxon>
        <taxon>Paracoccaceae</taxon>
        <taxon>Cereibacter</taxon>
    </lineage>
</organism>
<comment type="function">
    <text evidence="1">Cell wall formation. Catalyzes the transfer of a GlcNAc subunit on undecaprenyl-pyrophosphoryl-MurNAc-pentapeptide (lipid intermediate I) to form undecaprenyl-pyrophosphoryl-MurNAc-(pentapeptide)GlcNAc (lipid intermediate II).</text>
</comment>
<comment type="catalytic activity">
    <reaction evidence="1">
        <text>di-trans,octa-cis-undecaprenyl diphospho-N-acetyl-alpha-D-muramoyl-L-alanyl-D-glutamyl-meso-2,6-diaminopimeloyl-D-alanyl-D-alanine + UDP-N-acetyl-alpha-D-glucosamine = di-trans,octa-cis-undecaprenyl diphospho-[N-acetyl-alpha-D-glucosaminyl-(1-&gt;4)]-N-acetyl-alpha-D-muramoyl-L-alanyl-D-glutamyl-meso-2,6-diaminopimeloyl-D-alanyl-D-alanine + UDP + H(+)</text>
        <dbReference type="Rhea" id="RHEA:31227"/>
        <dbReference type="ChEBI" id="CHEBI:15378"/>
        <dbReference type="ChEBI" id="CHEBI:57705"/>
        <dbReference type="ChEBI" id="CHEBI:58223"/>
        <dbReference type="ChEBI" id="CHEBI:61387"/>
        <dbReference type="ChEBI" id="CHEBI:61388"/>
        <dbReference type="EC" id="2.4.1.227"/>
    </reaction>
</comment>
<comment type="pathway">
    <text evidence="1">Cell wall biogenesis; peptidoglycan biosynthesis.</text>
</comment>
<comment type="subcellular location">
    <subcellularLocation>
        <location evidence="1">Cell inner membrane</location>
        <topology evidence="1">Peripheral membrane protein</topology>
        <orientation evidence="1">Cytoplasmic side</orientation>
    </subcellularLocation>
</comment>
<comment type="similarity">
    <text evidence="1">Belongs to the glycosyltransferase 28 family. MurG subfamily.</text>
</comment>
<dbReference type="EC" id="2.4.1.227" evidence="1"/>
<dbReference type="EMBL" id="CP000661">
    <property type="protein sequence ID" value="ABP69599.1"/>
    <property type="molecule type" value="Genomic_DNA"/>
</dbReference>
<dbReference type="SMR" id="A4WQD5"/>
<dbReference type="STRING" id="349102.Rsph17025_0693"/>
<dbReference type="CAZy" id="GT28">
    <property type="family name" value="Glycosyltransferase Family 28"/>
</dbReference>
<dbReference type="KEGG" id="rsq:Rsph17025_0693"/>
<dbReference type="eggNOG" id="COG0707">
    <property type="taxonomic scope" value="Bacteria"/>
</dbReference>
<dbReference type="HOGENOM" id="CLU_037404_2_1_5"/>
<dbReference type="BioCyc" id="RSPH349102:G1G8M-715-MONOMER"/>
<dbReference type="UniPathway" id="UPA00219"/>
<dbReference type="GO" id="GO:0005886">
    <property type="term" value="C:plasma membrane"/>
    <property type="evidence" value="ECO:0007669"/>
    <property type="project" value="UniProtKB-SubCell"/>
</dbReference>
<dbReference type="GO" id="GO:0051991">
    <property type="term" value="F:UDP-N-acetyl-D-glucosamine:N-acetylmuramoyl-L-alanyl-D-glutamyl-meso-2,6-diaminopimelyl-D-alanyl-D-alanine-diphosphoundecaprenol 4-beta-N-acetylglucosaminlytransferase activity"/>
    <property type="evidence" value="ECO:0007669"/>
    <property type="project" value="RHEA"/>
</dbReference>
<dbReference type="GO" id="GO:0050511">
    <property type="term" value="F:undecaprenyldiphospho-muramoylpentapeptide beta-N-acetylglucosaminyltransferase activity"/>
    <property type="evidence" value="ECO:0007669"/>
    <property type="project" value="UniProtKB-UniRule"/>
</dbReference>
<dbReference type="GO" id="GO:0005975">
    <property type="term" value="P:carbohydrate metabolic process"/>
    <property type="evidence" value="ECO:0007669"/>
    <property type="project" value="InterPro"/>
</dbReference>
<dbReference type="GO" id="GO:0051301">
    <property type="term" value="P:cell division"/>
    <property type="evidence" value="ECO:0007669"/>
    <property type="project" value="UniProtKB-KW"/>
</dbReference>
<dbReference type="GO" id="GO:0071555">
    <property type="term" value="P:cell wall organization"/>
    <property type="evidence" value="ECO:0007669"/>
    <property type="project" value="UniProtKB-KW"/>
</dbReference>
<dbReference type="GO" id="GO:0030259">
    <property type="term" value="P:lipid glycosylation"/>
    <property type="evidence" value="ECO:0007669"/>
    <property type="project" value="UniProtKB-UniRule"/>
</dbReference>
<dbReference type="GO" id="GO:0009252">
    <property type="term" value="P:peptidoglycan biosynthetic process"/>
    <property type="evidence" value="ECO:0007669"/>
    <property type="project" value="UniProtKB-UniRule"/>
</dbReference>
<dbReference type="GO" id="GO:0008360">
    <property type="term" value="P:regulation of cell shape"/>
    <property type="evidence" value="ECO:0007669"/>
    <property type="project" value="UniProtKB-KW"/>
</dbReference>
<dbReference type="CDD" id="cd03785">
    <property type="entry name" value="GT28_MurG"/>
    <property type="match status" value="1"/>
</dbReference>
<dbReference type="Gene3D" id="3.40.50.2000">
    <property type="entry name" value="Glycogen Phosphorylase B"/>
    <property type="match status" value="2"/>
</dbReference>
<dbReference type="HAMAP" id="MF_00033">
    <property type="entry name" value="MurG"/>
    <property type="match status" value="1"/>
</dbReference>
<dbReference type="InterPro" id="IPR006009">
    <property type="entry name" value="GlcNAc_MurG"/>
</dbReference>
<dbReference type="InterPro" id="IPR007235">
    <property type="entry name" value="Glyco_trans_28_C"/>
</dbReference>
<dbReference type="InterPro" id="IPR004276">
    <property type="entry name" value="GlycoTrans_28_N"/>
</dbReference>
<dbReference type="PANTHER" id="PTHR21015:SF22">
    <property type="entry name" value="GLYCOSYLTRANSFERASE"/>
    <property type="match status" value="1"/>
</dbReference>
<dbReference type="PANTHER" id="PTHR21015">
    <property type="entry name" value="UDP-N-ACETYLGLUCOSAMINE--N-ACETYLMURAMYL-(PENTAPEPTIDE) PYROPHOSPHORYL-UNDECAPRENOL N-ACETYLGLUCOSAMINE TRANSFERASE 1"/>
    <property type="match status" value="1"/>
</dbReference>
<dbReference type="Pfam" id="PF04101">
    <property type="entry name" value="Glyco_tran_28_C"/>
    <property type="match status" value="1"/>
</dbReference>
<dbReference type="Pfam" id="PF03033">
    <property type="entry name" value="Glyco_transf_28"/>
    <property type="match status" value="1"/>
</dbReference>
<dbReference type="SUPFAM" id="SSF53756">
    <property type="entry name" value="UDP-Glycosyltransferase/glycogen phosphorylase"/>
    <property type="match status" value="1"/>
</dbReference>
<accession>A4WQD5</accession>
<reference key="1">
    <citation type="submission" date="2007-04" db="EMBL/GenBank/DDBJ databases">
        <title>Complete sequence of chromosome of Rhodobacter sphaeroides ATCC 17025.</title>
        <authorList>
            <consortium name="US DOE Joint Genome Institute"/>
            <person name="Copeland A."/>
            <person name="Lucas S."/>
            <person name="Lapidus A."/>
            <person name="Barry K."/>
            <person name="Detter J.C."/>
            <person name="Glavina del Rio T."/>
            <person name="Hammon N."/>
            <person name="Israni S."/>
            <person name="Dalin E."/>
            <person name="Tice H."/>
            <person name="Pitluck S."/>
            <person name="Chertkov O."/>
            <person name="Brettin T."/>
            <person name="Bruce D."/>
            <person name="Han C."/>
            <person name="Schmutz J."/>
            <person name="Larimer F."/>
            <person name="Land M."/>
            <person name="Hauser L."/>
            <person name="Kyrpides N."/>
            <person name="Kim E."/>
            <person name="Richardson P."/>
            <person name="Mackenzie C."/>
            <person name="Choudhary M."/>
            <person name="Donohue T.J."/>
            <person name="Kaplan S."/>
        </authorList>
    </citation>
    <scope>NUCLEOTIDE SEQUENCE [LARGE SCALE GENOMIC DNA]</scope>
    <source>
        <strain>ATCC 17025 / ATH 2.4.3</strain>
    </source>
</reference>
<feature type="chain" id="PRO_0000315148" description="UDP-N-acetylglucosamine--N-acetylmuramyl-(pentapeptide) pyrophosphoryl-undecaprenol N-acetylglucosamine transferase">
    <location>
        <begin position="1"/>
        <end position="364"/>
    </location>
</feature>
<feature type="binding site" evidence="1">
    <location>
        <begin position="13"/>
        <end position="15"/>
    </location>
    <ligand>
        <name>UDP-N-acetyl-alpha-D-glucosamine</name>
        <dbReference type="ChEBI" id="CHEBI:57705"/>
    </ligand>
</feature>
<feature type="binding site" evidence="1">
    <location>
        <position position="125"/>
    </location>
    <ligand>
        <name>UDP-N-acetyl-alpha-D-glucosamine</name>
        <dbReference type="ChEBI" id="CHEBI:57705"/>
    </ligand>
</feature>
<feature type="binding site" evidence="1">
    <location>
        <position position="165"/>
    </location>
    <ligand>
        <name>UDP-N-acetyl-alpha-D-glucosamine</name>
        <dbReference type="ChEBI" id="CHEBI:57705"/>
    </ligand>
</feature>
<feature type="binding site" evidence="1">
    <location>
        <position position="192"/>
    </location>
    <ligand>
        <name>UDP-N-acetyl-alpha-D-glucosamine</name>
        <dbReference type="ChEBI" id="CHEBI:57705"/>
    </ligand>
</feature>
<feature type="binding site" evidence="1">
    <location>
        <position position="293"/>
    </location>
    <ligand>
        <name>UDP-N-acetyl-alpha-D-glucosamine</name>
        <dbReference type="ChEBI" id="CHEBI:57705"/>
    </ligand>
</feature>
<gene>
    <name evidence="1" type="primary">murG</name>
    <name type="ordered locus">Rsph17025_0693</name>
</gene>
<keyword id="KW-0131">Cell cycle</keyword>
<keyword id="KW-0132">Cell division</keyword>
<keyword id="KW-0997">Cell inner membrane</keyword>
<keyword id="KW-1003">Cell membrane</keyword>
<keyword id="KW-0133">Cell shape</keyword>
<keyword id="KW-0961">Cell wall biogenesis/degradation</keyword>
<keyword id="KW-0328">Glycosyltransferase</keyword>
<keyword id="KW-0472">Membrane</keyword>
<keyword id="KW-0573">Peptidoglycan synthesis</keyword>
<keyword id="KW-0808">Transferase</keyword>
<sequence length="364" mass="38293">MGQPLLLIAAGGTGGHMFPAQALAEAMVRRGWRVKLSTDARGARYAGGFPHVVEIDQVSSGTFARGGALARALVPARIAAGVASAVVGFLRDRPAVVVGFGGYPSIPALSAAVALRLPRMIHEQNGVLGRVNRLFAPRVDAVCCGTWPTDLPEGVEGYYTGNPVRAAVLERAAAPYIAPGDYPMSLVVIGGSQGARILSDVVPEAIARLPREILANLRIAHQAREEDVARVTEAYDRAGLLAEVKTFFTDIPRRLSEAQLVISRSGASSVADISIIGRPAILVPFAAATADHQTANARGFVEAEAAILIPESALDPGSLSEHIAAVLSQPEAARQMARNALAHGRPDATERLVEVVEHLARKET</sequence>
<name>MURG_CERS5</name>
<protein>
    <recommendedName>
        <fullName evidence="1">UDP-N-acetylglucosamine--N-acetylmuramyl-(pentapeptide) pyrophosphoryl-undecaprenol N-acetylglucosamine transferase</fullName>
        <ecNumber evidence="1">2.4.1.227</ecNumber>
    </recommendedName>
    <alternativeName>
        <fullName evidence="1">Undecaprenyl-PP-MurNAc-pentapeptide-UDPGlcNAc GlcNAc transferase</fullName>
    </alternativeName>
</protein>
<evidence type="ECO:0000255" key="1">
    <source>
        <dbReference type="HAMAP-Rule" id="MF_00033"/>
    </source>
</evidence>